<organism>
    <name type="scientific">Gluconobacter oxydans (strain 621H)</name>
    <name type="common">Gluconobacter suboxydans</name>
    <dbReference type="NCBI Taxonomy" id="290633"/>
    <lineage>
        <taxon>Bacteria</taxon>
        <taxon>Pseudomonadati</taxon>
        <taxon>Pseudomonadota</taxon>
        <taxon>Alphaproteobacteria</taxon>
        <taxon>Acetobacterales</taxon>
        <taxon>Acetobacteraceae</taxon>
        <taxon>Gluconobacter</taxon>
    </lineage>
</organism>
<evidence type="ECO:0000255" key="1">
    <source>
        <dbReference type="HAMAP-Rule" id="MF_00377"/>
    </source>
</evidence>
<evidence type="ECO:0000256" key="2">
    <source>
        <dbReference type="SAM" id="MobiDB-lite"/>
    </source>
</evidence>
<dbReference type="EMBL" id="CP000009">
    <property type="protein sequence ID" value="AAW59800.1"/>
    <property type="molecule type" value="Genomic_DNA"/>
</dbReference>
<dbReference type="SMR" id="Q5FUU1"/>
<dbReference type="STRING" id="290633.GOX0001"/>
<dbReference type="KEGG" id="gox:GOX0001"/>
<dbReference type="eggNOG" id="COG0593">
    <property type="taxonomic scope" value="Bacteria"/>
</dbReference>
<dbReference type="HOGENOM" id="CLU_026910_3_0_5"/>
<dbReference type="Proteomes" id="UP000006375">
    <property type="component" value="Chromosome"/>
</dbReference>
<dbReference type="GO" id="GO:0005737">
    <property type="term" value="C:cytoplasm"/>
    <property type="evidence" value="ECO:0007669"/>
    <property type="project" value="UniProtKB-SubCell"/>
</dbReference>
<dbReference type="GO" id="GO:0005886">
    <property type="term" value="C:plasma membrane"/>
    <property type="evidence" value="ECO:0007669"/>
    <property type="project" value="TreeGrafter"/>
</dbReference>
<dbReference type="GO" id="GO:0005524">
    <property type="term" value="F:ATP binding"/>
    <property type="evidence" value="ECO:0007669"/>
    <property type="project" value="UniProtKB-UniRule"/>
</dbReference>
<dbReference type="GO" id="GO:0016887">
    <property type="term" value="F:ATP hydrolysis activity"/>
    <property type="evidence" value="ECO:0007669"/>
    <property type="project" value="InterPro"/>
</dbReference>
<dbReference type="GO" id="GO:0003688">
    <property type="term" value="F:DNA replication origin binding"/>
    <property type="evidence" value="ECO:0007669"/>
    <property type="project" value="UniProtKB-UniRule"/>
</dbReference>
<dbReference type="GO" id="GO:0008289">
    <property type="term" value="F:lipid binding"/>
    <property type="evidence" value="ECO:0007669"/>
    <property type="project" value="UniProtKB-KW"/>
</dbReference>
<dbReference type="GO" id="GO:0006270">
    <property type="term" value="P:DNA replication initiation"/>
    <property type="evidence" value="ECO:0007669"/>
    <property type="project" value="UniProtKB-UniRule"/>
</dbReference>
<dbReference type="GO" id="GO:0006275">
    <property type="term" value="P:regulation of DNA replication"/>
    <property type="evidence" value="ECO:0007669"/>
    <property type="project" value="UniProtKB-UniRule"/>
</dbReference>
<dbReference type="CDD" id="cd00009">
    <property type="entry name" value="AAA"/>
    <property type="match status" value="1"/>
</dbReference>
<dbReference type="CDD" id="cd06571">
    <property type="entry name" value="Bac_DnaA_C"/>
    <property type="match status" value="1"/>
</dbReference>
<dbReference type="FunFam" id="3.40.50.300:FF:000668">
    <property type="entry name" value="Chromosomal replication initiator protein DnaA"/>
    <property type="match status" value="1"/>
</dbReference>
<dbReference type="Gene3D" id="1.10.1750.10">
    <property type="match status" value="1"/>
</dbReference>
<dbReference type="Gene3D" id="1.10.8.60">
    <property type="match status" value="1"/>
</dbReference>
<dbReference type="Gene3D" id="3.30.300.180">
    <property type="match status" value="1"/>
</dbReference>
<dbReference type="Gene3D" id="3.40.50.300">
    <property type="entry name" value="P-loop containing nucleotide triphosphate hydrolases"/>
    <property type="match status" value="1"/>
</dbReference>
<dbReference type="HAMAP" id="MF_00377">
    <property type="entry name" value="DnaA_bact"/>
    <property type="match status" value="1"/>
</dbReference>
<dbReference type="InterPro" id="IPR003593">
    <property type="entry name" value="AAA+_ATPase"/>
</dbReference>
<dbReference type="InterPro" id="IPR001957">
    <property type="entry name" value="Chromosome_initiator_DnaA"/>
</dbReference>
<dbReference type="InterPro" id="IPR020591">
    <property type="entry name" value="Chromosome_initiator_DnaA-like"/>
</dbReference>
<dbReference type="InterPro" id="IPR018312">
    <property type="entry name" value="Chromosome_initiator_DnaA_CS"/>
</dbReference>
<dbReference type="InterPro" id="IPR013159">
    <property type="entry name" value="DnaA_C"/>
</dbReference>
<dbReference type="InterPro" id="IPR013317">
    <property type="entry name" value="DnaA_dom"/>
</dbReference>
<dbReference type="InterPro" id="IPR024633">
    <property type="entry name" value="DnaA_N_dom"/>
</dbReference>
<dbReference type="InterPro" id="IPR038454">
    <property type="entry name" value="DnaA_N_sf"/>
</dbReference>
<dbReference type="InterPro" id="IPR027417">
    <property type="entry name" value="P-loop_NTPase"/>
</dbReference>
<dbReference type="InterPro" id="IPR010921">
    <property type="entry name" value="Trp_repressor/repl_initiator"/>
</dbReference>
<dbReference type="NCBIfam" id="TIGR00362">
    <property type="entry name" value="DnaA"/>
    <property type="match status" value="1"/>
</dbReference>
<dbReference type="PANTHER" id="PTHR30050">
    <property type="entry name" value="CHROMOSOMAL REPLICATION INITIATOR PROTEIN DNAA"/>
    <property type="match status" value="1"/>
</dbReference>
<dbReference type="PANTHER" id="PTHR30050:SF2">
    <property type="entry name" value="CHROMOSOMAL REPLICATION INITIATOR PROTEIN DNAA"/>
    <property type="match status" value="1"/>
</dbReference>
<dbReference type="Pfam" id="PF00308">
    <property type="entry name" value="Bac_DnaA"/>
    <property type="match status" value="1"/>
</dbReference>
<dbReference type="Pfam" id="PF08299">
    <property type="entry name" value="Bac_DnaA_C"/>
    <property type="match status" value="1"/>
</dbReference>
<dbReference type="Pfam" id="PF11638">
    <property type="entry name" value="DnaA_N"/>
    <property type="match status" value="1"/>
</dbReference>
<dbReference type="PRINTS" id="PR00051">
    <property type="entry name" value="DNAA"/>
</dbReference>
<dbReference type="SMART" id="SM00382">
    <property type="entry name" value="AAA"/>
    <property type="match status" value="1"/>
</dbReference>
<dbReference type="SMART" id="SM00760">
    <property type="entry name" value="Bac_DnaA_C"/>
    <property type="match status" value="1"/>
</dbReference>
<dbReference type="SUPFAM" id="SSF52540">
    <property type="entry name" value="P-loop containing nucleoside triphosphate hydrolases"/>
    <property type="match status" value="1"/>
</dbReference>
<dbReference type="SUPFAM" id="SSF48295">
    <property type="entry name" value="TrpR-like"/>
    <property type="match status" value="1"/>
</dbReference>
<dbReference type="PROSITE" id="PS01008">
    <property type="entry name" value="DNAA"/>
    <property type="match status" value="1"/>
</dbReference>
<reference key="1">
    <citation type="journal article" date="2005" name="Nat. Biotechnol.">
        <title>Complete genome sequence of the acetic acid bacterium Gluconobacter oxydans.</title>
        <authorList>
            <person name="Prust C."/>
            <person name="Hoffmeister M."/>
            <person name="Liesegang H."/>
            <person name="Wiezer A."/>
            <person name="Fricke W.F."/>
            <person name="Ehrenreich A."/>
            <person name="Gottschalk G."/>
            <person name="Deppenmeier U."/>
        </authorList>
    </citation>
    <scope>NUCLEOTIDE SEQUENCE [LARGE SCALE GENOMIC DNA]</scope>
    <source>
        <strain>621H</strain>
    </source>
</reference>
<proteinExistence type="inferred from homology"/>
<sequence length="479" mass="53923">MKGGTMVENAQYLDASASAPGSTTPLETAWIRVREKLKSEVGEVEYRTWLRQIVLGPLEEDELTLYLPTRFLRDWVRSQYEERLQTLWRTEREDIKGVELQVKRGLPEVSMGDAEDGEDGSGEGHELATQAAAPESRSDLAVPLDPRFTFDTFIVGKPNEFAYACARRVAEKPSSPGFNPLFLYGGVGLGKTHLMHAIGTELTRTGKVSVAYMSAEKFMYRFIAAIRSQSTMEFKEQLRSVDVLMIDDLQFLIGKDNTQEEFFHTFNALVDAGRQIIVSADKSPSDLSGLEDRLRTRLGCGMVADIHATTFELRISILEAKAKASGTHVPSKVLEYLAHKITTNVRELEGALNRLIAHADLVGRPVTLDTTQDVLKDMLKAHDRRVTIEEIQRKVSEHWNIRLTDMSSARRARAVARPRQVAMYLAKQLTSRSLPEIGRKFGNRDHTTVMHAVNRVTELMDQDTSFAEDVELLRRMLEG</sequence>
<keyword id="KW-0067">ATP-binding</keyword>
<keyword id="KW-0963">Cytoplasm</keyword>
<keyword id="KW-0235">DNA replication</keyword>
<keyword id="KW-0238">DNA-binding</keyword>
<keyword id="KW-0446">Lipid-binding</keyword>
<keyword id="KW-0547">Nucleotide-binding</keyword>
<keyword id="KW-1185">Reference proteome</keyword>
<protein>
    <recommendedName>
        <fullName evidence="1">Chromosomal replication initiator protein DnaA</fullName>
    </recommendedName>
</protein>
<name>DNAA_GLUOX</name>
<gene>
    <name evidence="1" type="primary">dnaA</name>
    <name type="ordered locus">GOX0001</name>
</gene>
<comment type="function">
    <text evidence="1">Plays an essential role in the initiation and regulation of chromosomal replication. ATP-DnaA binds to the origin of replication (oriC) to initiate formation of the DNA replication initiation complex once per cell cycle. Binds the DnaA box (a 9 base pair repeat at the origin) and separates the double-stranded (ds)DNA. Forms a right-handed helical filament on oriC DNA; dsDNA binds to the exterior of the filament while single-stranded (ss)DNA is stabiized in the filament's interior. The ATP-DnaA-oriC complex binds and stabilizes one strand of the AT-rich DNA unwinding element (DUE), permitting loading of DNA polymerase. After initiation quickly degrades to an ADP-DnaA complex that is not apt for DNA replication. Binds acidic phospholipids.</text>
</comment>
<comment type="subunit">
    <text evidence="1">Oligomerizes as a right-handed, spiral filament on DNA at oriC.</text>
</comment>
<comment type="subcellular location">
    <subcellularLocation>
        <location evidence="1">Cytoplasm</location>
    </subcellularLocation>
</comment>
<comment type="domain">
    <text evidence="1">Domain I is involved in oligomerization and binding regulators, domain II is flexibile and of varying length in different bacteria, domain III forms the AAA+ region, while domain IV binds dsDNA.</text>
</comment>
<comment type="similarity">
    <text evidence="1">Belongs to the DnaA family.</text>
</comment>
<accession>Q5FUU1</accession>
<feature type="chain" id="PRO_0000114184" description="Chromosomal replication initiator protein DnaA">
    <location>
        <begin position="1"/>
        <end position="479"/>
    </location>
</feature>
<feature type="region of interest" description="Domain I, interacts with DnaA modulators" evidence="1">
    <location>
        <begin position="1"/>
        <end position="94"/>
    </location>
</feature>
<feature type="region of interest" description="Domain II" evidence="1">
    <location>
        <begin position="94"/>
        <end position="142"/>
    </location>
</feature>
<feature type="region of interest" description="Disordered" evidence="2">
    <location>
        <begin position="106"/>
        <end position="137"/>
    </location>
</feature>
<feature type="region of interest" description="Domain III, AAA+ region" evidence="1">
    <location>
        <begin position="143"/>
        <end position="359"/>
    </location>
</feature>
<feature type="region of interest" description="Domain IV, binds dsDNA" evidence="1">
    <location>
        <begin position="360"/>
        <end position="479"/>
    </location>
</feature>
<feature type="binding site" evidence="1">
    <location>
        <position position="188"/>
    </location>
    <ligand>
        <name>ATP</name>
        <dbReference type="ChEBI" id="CHEBI:30616"/>
    </ligand>
</feature>
<feature type="binding site" evidence="1">
    <location>
        <position position="190"/>
    </location>
    <ligand>
        <name>ATP</name>
        <dbReference type="ChEBI" id="CHEBI:30616"/>
    </ligand>
</feature>
<feature type="binding site" evidence="1">
    <location>
        <position position="191"/>
    </location>
    <ligand>
        <name>ATP</name>
        <dbReference type="ChEBI" id="CHEBI:30616"/>
    </ligand>
</feature>
<feature type="binding site" evidence="1">
    <location>
        <position position="192"/>
    </location>
    <ligand>
        <name>ATP</name>
        <dbReference type="ChEBI" id="CHEBI:30616"/>
    </ligand>
</feature>